<name>Y2202_MYCVP</name>
<dbReference type="EMBL" id="CP000511">
    <property type="protein sequence ID" value="ABM13016.1"/>
    <property type="molecule type" value="Genomic_DNA"/>
</dbReference>
<dbReference type="RefSeq" id="WP_011779429.1">
    <property type="nucleotide sequence ID" value="NC_008726.1"/>
</dbReference>
<dbReference type="SMR" id="A1T766"/>
<dbReference type="STRING" id="350058.Mvan_2202"/>
<dbReference type="KEGG" id="mva:Mvan_2202"/>
<dbReference type="eggNOG" id="COG0792">
    <property type="taxonomic scope" value="Bacteria"/>
</dbReference>
<dbReference type="HOGENOM" id="CLU_115353_2_3_11"/>
<dbReference type="Proteomes" id="UP000009159">
    <property type="component" value="Chromosome"/>
</dbReference>
<dbReference type="GO" id="GO:0003676">
    <property type="term" value="F:nucleic acid binding"/>
    <property type="evidence" value="ECO:0007669"/>
    <property type="project" value="InterPro"/>
</dbReference>
<dbReference type="CDD" id="cd20736">
    <property type="entry name" value="PoNe_Nuclease"/>
    <property type="match status" value="1"/>
</dbReference>
<dbReference type="Gene3D" id="3.40.1350.10">
    <property type="match status" value="1"/>
</dbReference>
<dbReference type="HAMAP" id="MF_00048">
    <property type="entry name" value="UPF0102"/>
    <property type="match status" value="1"/>
</dbReference>
<dbReference type="InterPro" id="IPR011335">
    <property type="entry name" value="Restrct_endonuc-II-like"/>
</dbReference>
<dbReference type="InterPro" id="IPR011856">
    <property type="entry name" value="tRNA_endonuc-like_dom_sf"/>
</dbReference>
<dbReference type="InterPro" id="IPR003509">
    <property type="entry name" value="UPF0102_YraN-like"/>
</dbReference>
<dbReference type="NCBIfam" id="NF009150">
    <property type="entry name" value="PRK12497.1-3"/>
    <property type="match status" value="1"/>
</dbReference>
<dbReference type="NCBIfam" id="NF009153">
    <property type="entry name" value="PRK12497.3-1"/>
    <property type="match status" value="1"/>
</dbReference>
<dbReference type="NCBIfam" id="NF009154">
    <property type="entry name" value="PRK12497.3-3"/>
    <property type="match status" value="1"/>
</dbReference>
<dbReference type="NCBIfam" id="TIGR00252">
    <property type="entry name" value="YraN family protein"/>
    <property type="match status" value="1"/>
</dbReference>
<dbReference type="PANTHER" id="PTHR34039">
    <property type="entry name" value="UPF0102 PROTEIN YRAN"/>
    <property type="match status" value="1"/>
</dbReference>
<dbReference type="PANTHER" id="PTHR34039:SF1">
    <property type="entry name" value="UPF0102 PROTEIN YRAN"/>
    <property type="match status" value="1"/>
</dbReference>
<dbReference type="Pfam" id="PF02021">
    <property type="entry name" value="UPF0102"/>
    <property type="match status" value="1"/>
</dbReference>
<dbReference type="SUPFAM" id="SSF52980">
    <property type="entry name" value="Restriction endonuclease-like"/>
    <property type="match status" value="1"/>
</dbReference>
<reference key="1">
    <citation type="submission" date="2006-12" db="EMBL/GenBank/DDBJ databases">
        <title>Complete sequence of Mycobacterium vanbaalenii PYR-1.</title>
        <authorList>
            <consortium name="US DOE Joint Genome Institute"/>
            <person name="Copeland A."/>
            <person name="Lucas S."/>
            <person name="Lapidus A."/>
            <person name="Barry K."/>
            <person name="Detter J.C."/>
            <person name="Glavina del Rio T."/>
            <person name="Hammon N."/>
            <person name="Israni S."/>
            <person name="Dalin E."/>
            <person name="Tice H."/>
            <person name="Pitluck S."/>
            <person name="Singan V."/>
            <person name="Schmutz J."/>
            <person name="Larimer F."/>
            <person name="Land M."/>
            <person name="Hauser L."/>
            <person name="Kyrpides N."/>
            <person name="Anderson I.J."/>
            <person name="Miller C."/>
            <person name="Richardson P."/>
        </authorList>
    </citation>
    <scope>NUCLEOTIDE SEQUENCE [LARGE SCALE GENOMIC DNA]</scope>
    <source>
        <strain>DSM 7251 / JCM 13017 / BCRC 16820 / KCTC 9966 / NRRL B-24157 / PYR-1</strain>
    </source>
</reference>
<accession>A1T766</accession>
<evidence type="ECO:0000255" key="1">
    <source>
        <dbReference type="HAMAP-Rule" id="MF_00048"/>
    </source>
</evidence>
<sequence length="121" mass="13372">MTGTESRAEIGALGEQLAVDYLQGLGLRVLARNWRCRYGELDVIAADGRAVVFIEVKTRTTDRFGGVAQAVTPTKVRRLRRLAGVWLAQQPGHWAAVRIDVVTVRIGRRRVPEVTHIKGVA</sequence>
<comment type="similarity">
    <text evidence="1">Belongs to the UPF0102 family.</text>
</comment>
<proteinExistence type="inferred from homology"/>
<gene>
    <name type="ordered locus">Mvan_2202</name>
</gene>
<organism>
    <name type="scientific">Mycolicibacterium vanbaalenii (strain DSM 7251 / JCM 13017 / BCRC 16820 / KCTC 9966 / NRRL B-24157 / PYR-1)</name>
    <name type="common">Mycobacterium vanbaalenii</name>
    <dbReference type="NCBI Taxonomy" id="350058"/>
    <lineage>
        <taxon>Bacteria</taxon>
        <taxon>Bacillati</taxon>
        <taxon>Actinomycetota</taxon>
        <taxon>Actinomycetes</taxon>
        <taxon>Mycobacteriales</taxon>
        <taxon>Mycobacteriaceae</taxon>
        <taxon>Mycolicibacterium</taxon>
    </lineage>
</organism>
<feature type="chain" id="PRO_0000336211" description="UPF0102 protein Mvan_2202">
    <location>
        <begin position="1"/>
        <end position="121"/>
    </location>
</feature>
<protein>
    <recommendedName>
        <fullName evidence="1">UPF0102 protein Mvan_2202</fullName>
    </recommendedName>
</protein>